<protein>
    <recommendedName>
        <fullName>Putative polyketide beta-ketoacyl synthase 2</fullName>
        <ecNumber>2.3.1.-</ecNumber>
    </recommendedName>
    <alternativeName>
        <fullName>ORF 2</fullName>
    </alternativeName>
</protein>
<organism>
    <name type="scientific">Streptomyces virginiae</name>
    <name type="common">Streptomyces cinnamonensis</name>
    <dbReference type="NCBI Taxonomy" id="1961"/>
    <lineage>
        <taxon>Bacteria</taxon>
        <taxon>Bacillati</taxon>
        <taxon>Actinomycetota</taxon>
        <taxon>Actinomycetes</taxon>
        <taxon>Kitasatosporales</taxon>
        <taxon>Streptomycetaceae</taxon>
        <taxon>Streptomyces</taxon>
    </lineage>
</organism>
<comment type="pathway">
    <text>Antifungal biosynthesis; monensin biosynthesis.</text>
</comment>
<comment type="miscellaneous">
    <text>This putative ketoacyl synthase lacks the active site cysteine.</text>
</comment>
<comment type="similarity">
    <text evidence="3">Belongs to the thiolase-like superfamily. Beta-ketoacyl-ACP synthases family.</text>
</comment>
<sequence>MTPVAVTGMGIAAPNGLGRPTTGRPPWAPRAASAASTRFDPSGYPAQLAGEIPGFRAAEHLPGRLVPQTDRVTRLSLAAADWALADAGVEVAAFDPLDMGVVTASHAGGFEFGQDELQKLLGQGQPVLSAYQSFAWFYAVNSGQISIRHGMKGPSGVVVSDQAGGLDALAQARRLVRKGTPLIVCGAVEPRSAPGAGSPSSPAGGMSDSDEPNRAYLPFDRDGRGYVPGGGRGVVPPLERAEAAPARGAEVYGEAGPLARLPAPHSGRGSTRAHAIRTALDDAGTAPGDIRRVFADGGGRYPNDRAEAEAISEVFGPGRVPVTCPRTMTGRLHSGAAPLDVACALLAMRAGVIPPTVHIDPCPEYDLDLVLYQVRPAALRTALGGARGHGGFNSALVVRAGQ</sequence>
<feature type="chain" id="PRO_0000180343" description="Putative polyketide beta-ketoacyl synthase 2">
    <location>
        <begin position="1"/>
        <end position="402"/>
    </location>
</feature>
<feature type="domain" description="Ketosynthase family 3 (KS3)" evidence="1">
    <location>
        <begin position="1"/>
        <end position="400"/>
    </location>
</feature>
<feature type="region of interest" description="Disordered" evidence="2">
    <location>
        <begin position="1"/>
        <end position="30"/>
    </location>
</feature>
<feature type="region of interest" description="Disordered" evidence="2">
    <location>
        <begin position="188"/>
        <end position="222"/>
    </location>
</feature>
<feature type="compositionally biased region" description="Low complexity" evidence="2">
    <location>
        <begin position="192"/>
        <end position="205"/>
    </location>
</feature>
<name>KAS2_STRVG</name>
<reference key="1">
    <citation type="journal article" date="1992" name="Mol. Gen. Genet.">
        <title>Characterisation of actI-homologous DNA encoding polyketide synthase genes from the monensin producer Streptomyces cinnamonensis.</title>
        <authorList>
            <person name="Arrowsmith T.J."/>
            <person name="Malpartida F."/>
            <person name="Sherman D.H."/>
            <person name="Birch A."/>
            <person name="Hopwood D.A."/>
            <person name="Robinson J.A."/>
        </authorList>
    </citation>
    <scope>NUCLEOTIDE SEQUENCE [GENOMIC DNA]</scope>
    <source>
        <strain>A3823.5</strain>
    </source>
</reference>
<accession>P41176</accession>
<evidence type="ECO:0000255" key="1">
    <source>
        <dbReference type="PROSITE-ProRule" id="PRU01348"/>
    </source>
</evidence>
<evidence type="ECO:0000256" key="2">
    <source>
        <dbReference type="SAM" id="MobiDB-lite"/>
    </source>
</evidence>
<evidence type="ECO:0000305" key="3"/>
<dbReference type="EC" id="2.3.1.-"/>
<dbReference type="EMBL" id="Z11511">
    <property type="protein sequence ID" value="CAA77597.1"/>
    <property type="molecule type" value="Genomic_DNA"/>
</dbReference>
<dbReference type="PIR" id="S25077">
    <property type="entry name" value="S25077"/>
</dbReference>
<dbReference type="SMR" id="P41176"/>
<dbReference type="UniPathway" id="UPA00178"/>
<dbReference type="GO" id="GO:0004315">
    <property type="term" value="F:3-oxoacyl-[acyl-carrier-protein] synthase activity"/>
    <property type="evidence" value="ECO:0007669"/>
    <property type="project" value="TreeGrafter"/>
</dbReference>
<dbReference type="GO" id="GO:0017000">
    <property type="term" value="P:antibiotic biosynthetic process"/>
    <property type="evidence" value="ECO:0007669"/>
    <property type="project" value="UniProtKB-KW"/>
</dbReference>
<dbReference type="GO" id="GO:0006633">
    <property type="term" value="P:fatty acid biosynthetic process"/>
    <property type="evidence" value="ECO:0007669"/>
    <property type="project" value="TreeGrafter"/>
</dbReference>
<dbReference type="CDD" id="cd00832">
    <property type="entry name" value="CLF"/>
    <property type="match status" value="1"/>
</dbReference>
<dbReference type="Gene3D" id="3.40.47.10">
    <property type="match status" value="2"/>
</dbReference>
<dbReference type="InterPro" id="IPR000794">
    <property type="entry name" value="Beta-ketoacyl_synthase"/>
</dbReference>
<dbReference type="InterPro" id="IPR014031">
    <property type="entry name" value="Ketoacyl_synth_C"/>
</dbReference>
<dbReference type="InterPro" id="IPR014030">
    <property type="entry name" value="Ketoacyl_synth_N"/>
</dbReference>
<dbReference type="InterPro" id="IPR020841">
    <property type="entry name" value="PKS_Beta-ketoAc_synthase_dom"/>
</dbReference>
<dbReference type="InterPro" id="IPR016039">
    <property type="entry name" value="Thiolase-like"/>
</dbReference>
<dbReference type="PANTHER" id="PTHR11712:SF322">
    <property type="entry name" value="POLYKETIDE BETA-KETOACYL SYNTHASE 2-RELATED"/>
    <property type="match status" value="1"/>
</dbReference>
<dbReference type="PANTHER" id="PTHR11712">
    <property type="entry name" value="POLYKETIDE SYNTHASE-RELATED"/>
    <property type="match status" value="1"/>
</dbReference>
<dbReference type="Pfam" id="PF00109">
    <property type="entry name" value="ketoacyl-synt"/>
    <property type="match status" value="1"/>
</dbReference>
<dbReference type="Pfam" id="PF02801">
    <property type="entry name" value="Ketoacyl-synt_C"/>
    <property type="match status" value="1"/>
</dbReference>
<dbReference type="SUPFAM" id="SSF53901">
    <property type="entry name" value="Thiolase-like"/>
    <property type="match status" value="2"/>
</dbReference>
<dbReference type="PROSITE" id="PS52004">
    <property type="entry name" value="KS3_2"/>
    <property type="match status" value="1"/>
</dbReference>
<keyword id="KW-0012">Acyltransferase</keyword>
<keyword id="KW-0045">Antibiotic biosynthesis</keyword>
<keyword id="KW-0808">Transferase</keyword>
<proteinExistence type="inferred from homology"/>